<evidence type="ECO:0000269" key="1">
    <source>
    </source>
</evidence>
<evidence type="ECO:0000303" key="2">
    <source>
    </source>
</evidence>
<evidence type="ECO:0000305" key="3"/>
<evidence type="ECO:0007744" key="4">
    <source>
        <dbReference type="PDB" id="8AMO"/>
    </source>
</evidence>
<evidence type="ECO:0007744" key="5">
    <source>
        <dbReference type="PDB" id="8AMQ"/>
    </source>
</evidence>
<evidence type="ECO:0007744" key="6">
    <source>
    </source>
</evidence>
<evidence type="ECO:0007829" key="7">
    <source>
        <dbReference type="PDB" id="8AMO"/>
    </source>
</evidence>
<evidence type="ECO:0007829" key="8">
    <source>
        <dbReference type="PDB" id="8AMQ"/>
    </source>
</evidence>
<gene>
    <name evidence="2" type="primary">cyp143</name>
    <name type="ordered locus">Rv1785c</name>
    <name type="ORF">MTV049.07c</name>
</gene>
<comment type="function">
    <text evidence="1">Cytochrome P450 that accepts electrons from the iron-sulfur ferredoxin FdxE encoded by an adjacent gene.</text>
</comment>
<comment type="cofactor">
    <cofactor evidence="1">
        <name>heme b</name>
        <dbReference type="ChEBI" id="CHEBI:60344"/>
    </cofactor>
</comment>
<comment type="subunit">
    <text evidence="1">Interacts with the ferredoxin FdxE with high affinity (Kd=84 nM).</text>
</comment>
<comment type="similarity">
    <text evidence="3">Belongs to the cytochrome P450 family.</text>
</comment>
<keyword id="KW-0002">3D-structure</keyword>
<keyword id="KW-0007">Acetylation</keyword>
<keyword id="KW-0349">Heme</keyword>
<keyword id="KW-0408">Iron</keyword>
<keyword id="KW-0479">Metal-binding</keyword>
<keyword id="KW-0503">Monooxygenase</keyword>
<keyword id="KW-0560">Oxidoreductase</keyword>
<keyword id="KW-1185">Reference proteome</keyword>
<sequence>MTTPGEDHAGSFYLPRLEYSTLPMAVDRGVGWKTLRDAGPVVFMNGWYYLTRREDVLAALRNPKVFSSRKALQPPGNPLPVVPLAFDPPEHTRYRRILQPYFSPAALSKALPSLRRHTVAMIDAIAGRGECEAMADLANLFPFQLFLVLYGLPLEDRDRLIGWKDAVIAMSDRPHPTEADVAAARELLEYLTAMVAERRRNPGPDVLSQVQIGEDPLSEIEVLGLSHLLILAGLDTVTAAVGFSLLELARRPQLRAMLRDNPKQIRVFIEEIVRLEPSAPVAPRVTTEPVTVGGMTLPAGSPVRLCMAAVNRDGSDAMSTDELVMDGKVHRHWGFGGGPHRCLGSHLARLELTLLVGEWLNQIPDFELAPDYAPEIRFPSKSFALKNLPLRWS</sequence>
<accession>P9WPL3</accession>
<accession>L0T7P2</accession>
<accession>O53936</accession>
<accession>P63723</accession>
<proteinExistence type="evidence at protein level"/>
<organism>
    <name type="scientific">Mycobacterium tuberculosis (strain ATCC 25618 / H37Rv)</name>
    <dbReference type="NCBI Taxonomy" id="83332"/>
    <lineage>
        <taxon>Bacteria</taxon>
        <taxon>Bacillati</taxon>
        <taxon>Actinomycetota</taxon>
        <taxon>Actinomycetes</taxon>
        <taxon>Mycobacteriales</taxon>
        <taxon>Mycobacteriaceae</taxon>
        <taxon>Mycobacterium</taxon>
        <taxon>Mycobacterium tuberculosis complex</taxon>
    </lineage>
</organism>
<reference key="1">
    <citation type="journal article" date="1998" name="Nature">
        <title>Deciphering the biology of Mycobacterium tuberculosis from the complete genome sequence.</title>
        <authorList>
            <person name="Cole S.T."/>
            <person name="Brosch R."/>
            <person name="Parkhill J."/>
            <person name="Garnier T."/>
            <person name="Churcher C.M."/>
            <person name="Harris D.E."/>
            <person name="Gordon S.V."/>
            <person name="Eiglmeier K."/>
            <person name="Gas S."/>
            <person name="Barry C.E. III"/>
            <person name="Tekaia F."/>
            <person name="Badcock K."/>
            <person name="Basham D."/>
            <person name="Brown D."/>
            <person name="Chillingworth T."/>
            <person name="Connor R."/>
            <person name="Davies R.M."/>
            <person name="Devlin K."/>
            <person name="Feltwell T."/>
            <person name="Gentles S."/>
            <person name="Hamlin N."/>
            <person name="Holroyd S."/>
            <person name="Hornsby T."/>
            <person name="Jagels K."/>
            <person name="Krogh A."/>
            <person name="McLean J."/>
            <person name="Moule S."/>
            <person name="Murphy L.D."/>
            <person name="Oliver S."/>
            <person name="Osborne J."/>
            <person name="Quail M.A."/>
            <person name="Rajandream M.A."/>
            <person name="Rogers J."/>
            <person name="Rutter S."/>
            <person name="Seeger K."/>
            <person name="Skelton S."/>
            <person name="Squares S."/>
            <person name="Squares R."/>
            <person name="Sulston J.E."/>
            <person name="Taylor K."/>
            <person name="Whitehead S."/>
            <person name="Barrell B.G."/>
        </authorList>
    </citation>
    <scope>NUCLEOTIDE SEQUENCE [LARGE SCALE GENOMIC DNA]</scope>
    <source>
        <strain>ATCC 25618 / H37Rv</strain>
    </source>
</reference>
<reference key="2">
    <citation type="journal article" date="2011" name="Mol. Cell. Proteomics">
        <title>Proteogenomic analysis of Mycobacterium tuberculosis by high resolution mass spectrometry.</title>
        <authorList>
            <person name="Kelkar D.S."/>
            <person name="Kumar D."/>
            <person name="Kumar P."/>
            <person name="Balakrishnan L."/>
            <person name="Muthusamy B."/>
            <person name="Yadav A.K."/>
            <person name="Shrivastava P."/>
            <person name="Marimuthu A."/>
            <person name="Anand S."/>
            <person name="Sundaram H."/>
            <person name="Kingsbury R."/>
            <person name="Harsha H.C."/>
            <person name="Nair B."/>
            <person name="Prasad T.S."/>
            <person name="Chauhan D.S."/>
            <person name="Katoch K."/>
            <person name="Katoch V.M."/>
            <person name="Kumar P."/>
            <person name="Chaerkady R."/>
            <person name="Ramachandran S."/>
            <person name="Dash D."/>
            <person name="Pandey A."/>
        </authorList>
    </citation>
    <scope>ACETYLATION [LARGE SCALE ANALYSIS] AT THR-2</scope>
    <scope>CLEAVAGE OF INITIATOR METHIONINE [LARGE SCALE ANALYSIS]</scope>
    <scope>IDENTIFICATION BY MASS SPECTROMETRY [LARGE SCALE ANALYSIS]</scope>
    <source>
        <strain>ATCC 25618 / H37Rv</strain>
    </source>
</reference>
<reference evidence="4 5" key="3">
    <citation type="journal article" date="2022" name="Front. Mol. Biosci.">
        <title>Structural insights into 3Fe-4S ferredoxins diversity in M. tuberculosis highlighted by a first redox complex with P450.</title>
        <authorList>
            <person name="Gilep A."/>
            <person name="Varaksa T."/>
            <person name="Bukhdruker S."/>
            <person name="Kavaleuski A."/>
            <person name="Ryzhykau Y."/>
            <person name="Smolskaya S."/>
            <person name="Sushko T."/>
            <person name="Tsumoto K."/>
            <person name="Grabovec I."/>
            <person name="Kapranov I."/>
            <person name="Okhrimenko I."/>
            <person name="Marin E."/>
            <person name="Shevtsov M."/>
            <person name="Mishin A."/>
            <person name="Kovalev K."/>
            <person name="Kuklin A."/>
            <person name="Gordeliy V."/>
            <person name="Kaluzhskiy L."/>
            <person name="Gnedenko O."/>
            <person name="Yablokov E."/>
            <person name="Ivanov A."/>
            <person name="Borshchevskiy V."/>
            <person name="Strushkevich N."/>
        </authorList>
    </citation>
    <scope>X-RAY CRYSTALLOGRAPHY (1.4 ANGSTROMS) OF COMPLEX WITH HEME B AND FUSION COMPLEX WITH FERREDOXIN FDXE</scope>
    <scope>FUNCTION</scope>
    <scope>COFACTOR</scope>
    <scope>INTERACTION WITH FDXE</scope>
</reference>
<feature type="initiator methionine" description="Removed" evidence="6">
    <location>
        <position position="1"/>
    </location>
</feature>
<feature type="chain" id="PRO_0000052306" description="Cytochrome P450 143">
    <location>
        <begin position="2"/>
        <end position="393"/>
    </location>
</feature>
<feature type="binding site" evidence="1 4 5">
    <location>
        <position position="91"/>
    </location>
    <ligand>
        <name>heme b</name>
        <dbReference type="ChEBI" id="CHEBI:60344"/>
    </ligand>
</feature>
<feature type="binding site" evidence="1 4 5">
    <location>
        <position position="95"/>
    </location>
    <ligand>
        <name>heme b</name>
        <dbReference type="ChEBI" id="CHEBI:60344"/>
    </ligand>
</feature>
<feature type="binding site" evidence="1 4 5">
    <location>
        <position position="284"/>
    </location>
    <ligand>
        <name>heme b</name>
        <dbReference type="ChEBI" id="CHEBI:60344"/>
    </ligand>
</feature>
<feature type="binding site" evidence="1 4 5">
    <location>
        <position position="340"/>
    </location>
    <ligand>
        <name>heme b</name>
        <dbReference type="ChEBI" id="CHEBI:60344"/>
    </ligand>
</feature>
<feature type="binding site" description="axial binding residue" evidence="1 4 5">
    <location>
        <position position="342"/>
    </location>
    <ligand>
        <name>heme b</name>
        <dbReference type="ChEBI" id="CHEBI:60344"/>
    </ligand>
    <ligandPart>
        <name>Fe</name>
        <dbReference type="ChEBI" id="CHEBI:18248"/>
    </ligandPart>
</feature>
<feature type="modified residue" description="N-acetylthreonine" evidence="6">
    <location>
        <position position="2"/>
    </location>
</feature>
<feature type="helix" evidence="7">
    <location>
        <begin position="19"/>
        <end position="21"/>
    </location>
</feature>
<feature type="helix" evidence="7">
    <location>
        <begin position="28"/>
        <end position="36"/>
    </location>
</feature>
<feature type="strand" evidence="7">
    <location>
        <begin position="40"/>
        <end position="44"/>
    </location>
</feature>
<feature type="strand" evidence="7">
    <location>
        <begin position="47"/>
        <end position="50"/>
    </location>
</feature>
<feature type="helix" evidence="7">
    <location>
        <begin position="53"/>
        <end position="60"/>
    </location>
</feature>
<feature type="turn" evidence="7">
    <location>
        <begin position="63"/>
        <end position="65"/>
    </location>
</feature>
<feature type="strand" evidence="7">
    <location>
        <begin position="66"/>
        <end position="68"/>
    </location>
</feature>
<feature type="helix" evidence="7">
    <location>
        <begin position="69"/>
        <end position="72"/>
    </location>
</feature>
<feature type="strand" evidence="7">
    <location>
        <begin position="75"/>
        <end position="77"/>
    </location>
</feature>
<feature type="turn" evidence="7">
    <location>
        <begin position="82"/>
        <end position="85"/>
    </location>
</feature>
<feature type="helix" evidence="7">
    <location>
        <begin position="90"/>
        <end position="102"/>
    </location>
</feature>
<feature type="helix" evidence="7">
    <location>
        <begin position="104"/>
        <end position="108"/>
    </location>
</feature>
<feature type="helix" evidence="7">
    <location>
        <begin position="111"/>
        <end position="126"/>
    </location>
</feature>
<feature type="strand" evidence="7">
    <location>
        <begin position="129"/>
        <end position="132"/>
    </location>
</feature>
<feature type="helix" evidence="7">
    <location>
        <begin position="133"/>
        <end position="136"/>
    </location>
</feature>
<feature type="turn" evidence="7">
    <location>
        <begin position="137"/>
        <end position="140"/>
    </location>
</feature>
<feature type="helix" evidence="7">
    <location>
        <begin position="141"/>
        <end position="150"/>
    </location>
</feature>
<feature type="helix" evidence="7">
    <location>
        <begin position="154"/>
        <end position="156"/>
    </location>
</feature>
<feature type="helix" evidence="7">
    <location>
        <begin position="157"/>
        <end position="170"/>
    </location>
</feature>
<feature type="helix" evidence="7">
    <location>
        <begin position="178"/>
        <end position="200"/>
    </location>
</feature>
<feature type="helix" evidence="7">
    <location>
        <begin position="206"/>
        <end position="209"/>
    </location>
</feature>
<feature type="strand" evidence="7">
    <location>
        <begin position="212"/>
        <end position="215"/>
    </location>
</feature>
<feature type="helix" evidence="7">
    <location>
        <begin position="219"/>
        <end position="232"/>
    </location>
</feature>
<feature type="helix" evidence="7">
    <location>
        <begin position="235"/>
        <end position="249"/>
    </location>
</feature>
<feature type="helix" evidence="7">
    <location>
        <begin position="252"/>
        <end position="258"/>
    </location>
</feature>
<feature type="helix" evidence="7">
    <location>
        <begin position="262"/>
        <end position="275"/>
    </location>
</feature>
<feature type="strand" evidence="7">
    <location>
        <begin position="282"/>
        <end position="288"/>
    </location>
</feature>
<feature type="strand" evidence="7">
    <location>
        <begin position="290"/>
        <end position="292"/>
    </location>
</feature>
<feature type="strand" evidence="7">
    <location>
        <begin position="295"/>
        <end position="297"/>
    </location>
</feature>
<feature type="strand" evidence="7">
    <location>
        <begin position="302"/>
        <end position="305"/>
    </location>
</feature>
<feature type="helix" evidence="7">
    <location>
        <begin position="307"/>
        <end position="310"/>
    </location>
</feature>
<feature type="strand" evidence="7">
    <location>
        <begin position="319"/>
        <end position="322"/>
    </location>
</feature>
<feature type="strand" evidence="8">
    <location>
        <begin position="326"/>
        <end position="328"/>
    </location>
</feature>
<feature type="helix" evidence="7">
    <location>
        <begin position="338"/>
        <end position="340"/>
    </location>
</feature>
<feature type="helix" evidence="7">
    <location>
        <begin position="345"/>
        <end position="362"/>
    </location>
</feature>
<feature type="strand" evidence="7">
    <location>
        <begin position="378"/>
        <end position="381"/>
    </location>
</feature>
<feature type="strand" evidence="7">
    <location>
        <begin position="384"/>
        <end position="386"/>
    </location>
</feature>
<feature type="strand" evidence="7">
    <location>
        <begin position="389"/>
        <end position="391"/>
    </location>
</feature>
<protein>
    <recommendedName>
        <fullName evidence="2">Cytochrome P450 143</fullName>
        <ecNumber>1.14.-.-</ecNumber>
    </recommendedName>
</protein>
<dbReference type="EC" id="1.14.-.-"/>
<dbReference type="EMBL" id="AL123456">
    <property type="protein sequence ID" value="CCP44551.1"/>
    <property type="molecule type" value="Genomic_DNA"/>
</dbReference>
<dbReference type="PIR" id="C70929">
    <property type="entry name" value="C70929"/>
</dbReference>
<dbReference type="RefSeq" id="NP_216301.1">
    <property type="nucleotide sequence ID" value="NC_000962.3"/>
</dbReference>
<dbReference type="RefSeq" id="WP_003408802.1">
    <property type="nucleotide sequence ID" value="NZ_NVQJ01000037.1"/>
</dbReference>
<dbReference type="PDB" id="8AMO">
    <property type="method" value="X-ray"/>
    <property type="resolution" value="1.40 A"/>
    <property type="chains" value="A=2-393"/>
</dbReference>
<dbReference type="PDB" id="8AMQ">
    <property type="method" value="X-ray"/>
    <property type="resolution" value="1.60 A"/>
    <property type="chains" value="A=2-393"/>
</dbReference>
<dbReference type="PDB" id="8CKN">
    <property type="method" value="X-ray"/>
    <property type="resolution" value="1.54 A"/>
    <property type="chains" value="A=1-393"/>
</dbReference>
<dbReference type="PDBsum" id="8AMO"/>
<dbReference type="PDBsum" id="8AMQ"/>
<dbReference type="PDBsum" id="8CKN"/>
<dbReference type="SMR" id="P9WPL3"/>
<dbReference type="FunCoup" id="P9WPL3">
    <property type="interactions" value="10"/>
</dbReference>
<dbReference type="STRING" id="83332.Rv1785c"/>
<dbReference type="iPTMnet" id="P9WPL3"/>
<dbReference type="PaxDb" id="83332-Rv1785c"/>
<dbReference type="DNASU" id="885907"/>
<dbReference type="GeneID" id="885907"/>
<dbReference type="KEGG" id="mtu:Rv1785c"/>
<dbReference type="KEGG" id="mtv:RVBD_1785c"/>
<dbReference type="TubercuList" id="Rv1785c"/>
<dbReference type="eggNOG" id="COG2124">
    <property type="taxonomic scope" value="Bacteria"/>
</dbReference>
<dbReference type="InParanoid" id="P9WPL3"/>
<dbReference type="OrthoDB" id="3599725at2"/>
<dbReference type="PhylomeDB" id="P9WPL3"/>
<dbReference type="Proteomes" id="UP000001584">
    <property type="component" value="Chromosome"/>
</dbReference>
<dbReference type="GO" id="GO:0020037">
    <property type="term" value="F:heme binding"/>
    <property type="evidence" value="ECO:0000318"/>
    <property type="project" value="GO_Central"/>
</dbReference>
<dbReference type="GO" id="GO:0005506">
    <property type="term" value="F:iron ion binding"/>
    <property type="evidence" value="ECO:0007669"/>
    <property type="project" value="InterPro"/>
</dbReference>
<dbReference type="GO" id="GO:0004497">
    <property type="term" value="F:monooxygenase activity"/>
    <property type="evidence" value="ECO:0000318"/>
    <property type="project" value="GO_Central"/>
</dbReference>
<dbReference type="GO" id="GO:0016705">
    <property type="term" value="F:oxidoreductase activity, acting on paired donors, with incorporation or reduction of molecular oxygen"/>
    <property type="evidence" value="ECO:0007669"/>
    <property type="project" value="InterPro"/>
</dbReference>
<dbReference type="CDD" id="cd11035">
    <property type="entry name" value="P450cam-like"/>
    <property type="match status" value="1"/>
</dbReference>
<dbReference type="Gene3D" id="1.10.630.10">
    <property type="entry name" value="Cytochrome P450"/>
    <property type="match status" value="1"/>
</dbReference>
<dbReference type="InterPro" id="IPR001128">
    <property type="entry name" value="Cyt_P450"/>
</dbReference>
<dbReference type="InterPro" id="IPR002397">
    <property type="entry name" value="Cyt_P450_B"/>
</dbReference>
<dbReference type="InterPro" id="IPR017972">
    <property type="entry name" value="Cyt_P450_CS"/>
</dbReference>
<dbReference type="InterPro" id="IPR036396">
    <property type="entry name" value="Cyt_P450_sf"/>
</dbReference>
<dbReference type="PANTHER" id="PTHR46696">
    <property type="entry name" value="P450, PUTATIVE (EUROFUNG)-RELATED"/>
    <property type="match status" value="1"/>
</dbReference>
<dbReference type="PANTHER" id="PTHR46696:SF6">
    <property type="entry name" value="P450, PUTATIVE (EUROFUNG)-RELATED"/>
    <property type="match status" value="1"/>
</dbReference>
<dbReference type="Pfam" id="PF00067">
    <property type="entry name" value="p450"/>
    <property type="match status" value="2"/>
</dbReference>
<dbReference type="PRINTS" id="PR00359">
    <property type="entry name" value="BP450"/>
</dbReference>
<dbReference type="PRINTS" id="PR00385">
    <property type="entry name" value="P450"/>
</dbReference>
<dbReference type="SUPFAM" id="SSF48264">
    <property type="entry name" value="Cytochrome P450"/>
    <property type="match status" value="1"/>
</dbReference>
<dbReference type="PROSITE" id="PS00086">
    <property type="entry name" value="CYTOCHROME_P450"/>
    <property type="match status" value="1"/>
</dbReference>
<name>CP143_MYCTU</name>